<evidence type="ECO:0000255" key="1">
    <source>
        <dbReference type="HAMAP-Rule" id="MF_01368"/>
    </source>
</evidence>
<evidence type="ECO:0000269" key="2">
    <source>
    </source>
</evidence>
<evidence type="ECO:0000269" key="3">
    <source>
    </source>
</evidence>
<evidence type="ECO:0000269" key="4">
    <source>
    </source>
</evidence>
<evidence type="ECO:0000269" key="5">
    <source>
    </source>
</evidence>
<evidence type="ECO:0000269" key="6">
    <source>
    </source>
</evidence>
<evidence type="ECO:0000269" key="7">
    <source>
    </source>
</evidence>
<evidence type="ECO:0000305" key="8"/>
<evidence type="ECO:0007829" key="9">
    <source>
        <dbReference type="PDB" id="3PIO"/>
    </source>
</evidence>
<evidence type="ECO:0007829" key="10">
    <source>
        <dbReference type="PDB" id="5DM6"/>
    </source>
</evidence>
<comment type="function">
    <text>Binds to the 23S rRNA.</text>
</comment>
<comment type="subunit">
    <text evidence="2 3 4 5 6 7">Part of the 50S ribosomal subunit. Contacts proteins L3 and L32.</text>
</comment>
<comment type="similarity">
    <text evidence="1">Belongs to the bacterial ribosomal protein bL17 family.</text>
</comment>
<keyword id="KW-0002">3D-structure</keyword>
<keyword id="KW-0903">Direct protein sequencing</keyword>
<keyword id="KW-1185">Reference proteome</keyword>
<keyword id="KW-0687">Ribonucleoprotein</keyword>
<keyword id="KW-0689">Ribosomal protein</keyword>
<keyword id="KW-0694">RNA-binding</keyword>
<keyword id="KW-0699">rRNA-binding</keyword>
<name>RL17_DEIRA</name>
<gene>
    <name evidence="1" type="primary">rplQ</name>
    <name type="ordered locus">DR_2129</name>
</gene>
<feature type="chain" id="PRO_0000175523" description="Large ribosomal subunit protein bL17">
    <location>
        <begin position="1"/>
        <end position="116"/>
    </location>
</feature>
<feature type="helix" evidence="10">
    <location>
        <begin position="14"/>
        <end position="30"/>
    </location>
</feature>
<feature type="strand" evidence="10">
    <location>
        <begin position="32"/>
        <end position="37"/>
    </location>
</feature>
<feature type="helix" evidence="10">
    <location>
        <begin position="38"/>
        <end position="55"/>
    </location>
</feature>
<feature type="helix" evidence="10">
    <location>
        <begin position="60"/>
        <end position="69"/>
    </location>
</feature>
<feature type="helix" evidence="10">
    <location>
        <begin position="73"/>
        <end position="81"/>
    </location>
</feature>
<feature type="helix" evidence="10">
    <location>
        <begin position="83"/>
        <end position="87"/>
    </location>
</feature>
<feature type="strand" evidence="9">
    <location>
        <begin position="89"/>
        <end position="92"/>
    </location>
</feature>
<feature type="strand" evidence="10">
    <location>
        <begin position="96"/>
        <end position="102"/>
    </location>
</feature>
<feature type="turn" evidence="10">
    <location>
        <begin position="104"/>
        <end position="106"/>
    </location>
</feature>
<feature type="strand" evidence="10">
    <location>
        <begin position="109"/>
        <end position="114"/>
    </location>
</feature>
<reference key="1">
    <citation type="journal article" date="1999" name="Science">
        <title>Genome sequence of the radioresistant bacterium Deinococcus radiodurans R1.</title>
        <authorList>
            <person name="White O."/>
            <person name="Eisen J.A."/>
            <person name="Heidelberg J.F."/>
            <person name="Hickey E.K."/>
            <person name="Peterson J.D."/>
            <person name="Dodson R.J."/>
            <person name="Haft D.H."/>
            <person name="Gwinn M.L."/>
            <person name="Nelson W.C."/>
            <person name="Richardson D.L."/>
            <person name="Moffat K.S."/>
            <person name="Qin H."/>
            <person name="Jiang L."/>
            <person name="Pamphile W."/>
            <person name="Crosby M."/>
            <person name="Shen M."/>
            <person name="Vamathevan J.J."/>
            <person name="Lam P."/>
            <person name="McDonald L.A."/>
            <person name="Utterback T.R."/>
            <person name="Zalewski C."/>
            <person name="Makarova K.S."/>
            <person name="Aravind L."/>
            <person name="Daly M.J."/>
            <person name="Minton K.W."/>
            <person name="Fleischmann R.D."/>
            <person name="Ketchum K.A."/>
            <person name="Nelson K.E."/>
            <person name="Salzberg S.L."/>
            <person name="Smith H.O."/>
            <person name="Venter J.C."/>
            <person name="Fraser C.M."/>
        </authorList>
    </citation>
    <scope>NUCLEOTIDE SEQUENCE [LARGE SCALE GENOMIC DNA]</scope>
    <source>
        <strain>ATCC 13939 / DSM 20539 / JCM 16871 / CCUG 27074 / LMG 4051 / NBRC 15346 / NCIMB 9279 / VKM B-1422 / R1</strain>
    </source>
</reference>
<reference key="2">
    <citation type="journal article" date="2001" name="Cell">
        <title>High resolution structure of the large ribosomal subunit from a mesophilic eubacterium.</title>
        <authorList>
            <person name="Harms J."/>
            <person name="Schluenzen F."/>
            <person name="Zarivach R."/>
            <person name="Bashan A."/>
            <person name="Gat S."/>
            <person name="Agmon I."/>
            <person name="Bartels H."/>
            <person name="Franceschi F."/>
            <person name="Yonath A."/>
        </authorList>
    </citation>
    <scope>X-RAY CRYSTALLOGRAPHY (3.1 ANGSTROMS) OF THE 50S SUBUNIT</scope>
    <scope>PROTEIN SEQUENCE OF 1-5</scope>
    <scope>CONTACTS WITH 23S RRNA</scope>
    <source>
        <strain>ATCC 13939 / DSM 20539 / JCM 16871 / CCUG 27074 / LMG 4051 / NBRC 15346 / NCIMB 9279 / VKM B-1422 / R1</strain>
    </source>
</reference>
<reference key="3">
    <citation type="journal article" date="2001" name="Nature">
        <title>Structural basis for the interaction of antibiotics with the peptidyl transferase centre in eubacteria.</title>
        <authorList>
            <person name="Schluenzen F."/>
            <person name="Zarivach R."/>
            <person name="Harms J."/>
            <person name="Bashan A."/>
            <person name="Tocilj A."/>
            <person name="Albrecht R."/>
            <person name="Yonath A."/>
            <person name="Franceschi F."/>
        </authorList>
    </citation>
    <scope>X-RAY CRYSTALLOGRAPHY (3.1 ANGSTROMS) OF THE 50S SUBUNIT IN COMPLEX WITH FIVE ANTIBIOTICS</scope>
    <source>
        <strain>ATCC 13939 / DSM 20539 / JCM 16871 / CCUG 27074 / LMG 4051 / NBRC 15346 / NCIMB 9279 / VKM B-1422 / R1</strain>
    </source>
</reference>
<reference key="4">
    <citation type="journal article" date="2003" name="Mol. Cell">
        <title>Structural basis of the ribosomal machinery for peptide bond formation, translocation, and nascent chain progression.</title>
        <authorList>
            <person name="Bashan A."/>
            <person name="Agmon I."/>
            <person name="Zarivach R."/>
            <person name="Schluenzen F."/>
            <person name="Harms J."/>
            <person name="Berisio R."/>
            <person name="Bartels H."/>
            <person name="Franceschi F."/>
            <person name="Auerbach T."/>
            <person name="Hansen H.A."/>
            <person name="Kossoy E."/>
            <person name="Kessler M."/>
            <person name="Yonath A."/>
        </authorList>
    </citation>
    <scope>X-RAY CRYSTALLOGRAPHY (3.5 ANGSTROMS) OF THE 50S SUBUNIT IN COMPLEX WITH TRNA MIMICS</scope>
    <source>
        <strain>ATCC 13939 / DSM 20539 / JCM 16871 / CCUG 27074 / LMG 4051 / NBRC 15346 / NCIMB 9279 / VKM B-1422 / R1</strain>
    </source>
</reference>
<reference key="5">
    <citation type="journal article" date="2003" name="Structure">
        <title>Structural basis for the antibiotic activity of ketolides and azalides.</title>
        <authorList>
            <person name="Schluenzen F."/>
            <person name="Harms J.M."/>
            <person name="Franceschi F."/>
            <person name="Hansen H.A."/>
            <person name="Bartels H."/>
            <person name="Zarivach R."/>
            <person name="Yonath A."/>
        </authorList>
    </citation>
    <scope>X-RAY CRYSTALLOGRAPHY (3.3 ANGSTROMS) OF THE 50S SUBUNIT IN COMPLEX WITH MODIFIED MACROLIDE ANTIBIOTICS</scope>
    <source>
        <strain>ATCC 13939 / DSM 20539 / JCM 16871 / CCUG 27074 / LMG 4051 / NBRC 15346 / NCIMB 9279 / VKM B-1422 / R1</strain>
    </source>
</reference>
<reference key="6">
    <citation type="journal article" date="2003" name="Nat. Struct. Biol.">
        <title>Structural insight into the role of the ribosomal tunnel in cellular regulation.</title>
        <authorList>
            <person name="Berisio R."/>
            <person name="Schluenzen F."/>
            <person name="Harms J."/>
            <person name="Bashan A."/>
            <person name="Auerbach T."/>
            <person name="Baram D."/>
            <person name="Yonath A."/>
        </authorList>
    </citation>
    <scope>X-RAY CRYSTALLOGRAPHY (3.4 ANGSTROMS) OF THE 50S SUBUNIT IN COMPLEX WITH TROLEANDOMYCIN</scope>
    <source>
        <strain>ATCC 13939 / DSM 20539 / JCM 16871 / CCUG 27074 / LMG 4051 / NBRC 15346 / NCIMB 9279 / VKM B-1422 / R1</strain>
    </source>
</reference>
<reference key="7">
    <citation type="journal article" date="2004" name="BMC Biol.">
        <title>Alterations at the peptidyl transferase centre of the ribosome induced by the synergistic action of the streptogramins dalfopristin and quinupristin.</title>
        <authorList>
            <person name="Harms J.M."/>
            <person name="Schluenzen F."/>
            <person name="Fucini P."/>
            <person name="Bartels H."/>
            <person name="Yonath A."/>
        </authorList>
    </citation>
    <scope>X-RAY CRYSTALLOGRAPHY (3.4 ANGSTROMS) OF THE 50S SUBUNIT IN COMPLEX WITH THE STREPTOGRAMINS QUINUPRISTIN AND DALFOPRISTIN</scope>
    <source>
        <strain>ATCC 13939 / DSM 20539 / JCM 16871 / CCUG 27074 / LMG 4051 / NBRC 15346 / NCIMB 9279 / VKM B-1422 / R1</strain>
    </source>
</reference>
<reference key="8">
    <citation type="journal article" date="2004" name="Mol. Microbiol.">
        <title>Inhibition of peptide bond formation by pleuromutilins: the structure of the 50S ribosomal subunit from Deinococcus radiodurans in complex with tiamulin.</title>
        <authorList>
            <person name="Schluenzen F."/>
            <person name="Pyetan E."/>
            <person name="Fucini P."/>
            <person name="Yonath A."/>
            <person name="Harms J.M."/>
        </authorList>
    </citation>
    <scope>X-RAY CRYSTALLOGRAPHY (3.5 ANGSTROMS) OF THE 50S SUBUNIT IN COMPLEX WITH TIAMULIN</scope>
    <source>
        <strain>ATCC 13939 / DSM 20539 / JCM 16871 / CCUG 27074 / LMG 4051 / NBRC 15346 / NCIMB 9279 / VKM B-1422 / R1</strain>
    </source>
</reference>
<sequence>MRHGKAGRKLNRNSSARVALARAQATALLREGRIQTTLTKAKELRPFVEQLITTAKGGDLHSRRLVAQDIHDKDVVRKVMDEVAPKYAERPGGYTRILRVGTRRGDGVTMALIELV</sequence>
<accession>Q9RSJ5</accession>
<protein>
    <recommendedName>
        <fullName evidence="1">Large ribosomal subunit protein bL17</fullName>
    </recommendedName>
    <alternativeName>
        <fullName evidence="8">50S ribosomal protein L17</fullName>
    </alternativeName>
</protein>
<organism>
    <name type="scientific">Deinococcus radiodurans (strain ATCC 13939 / DSM 20539 / JCM 16871 / CCUG 27074 / LMG 4051 / NBRC 15346 / NCIMB 9279 / VKM B-1422 / R1)</name>
    <dbReference type="NCBI Taxonomy" id="243230"/>
    <lineage>
        <taxon>Bacteria</taxon>
        <taxon>Thermotogati</taxon>
        <taxon>Deinococcota</taxon>
        <taxon>Deinococci</taxon>
        <taxon>Deinococcales</taxon>
        <taxon>Deinococcaceae</taxon>
        <taxon>Deinococcus</taxon>
    </lineage>
</organism>
<dbReference type="EMBL" id="AE000513">
    <property type="protein sequence ID" value="AAF11679.1"/>
    <property type="molecule type" value="Genomic_DNA"/>
</dbReference>
<dbReference type="PIR" id="B75313">
    <property type="entry name" value="B75313"/>
</dbReference>
<dbReference type="RefSeq" id="NP_295852.1">
    <property type="nucleotide sequence ID" value="NC_001263.1"/>
</dbReference>
<dbReference type="RefSeq" id="WP_010888760.1">
    <property type="nucleotide sequence ID" value="NC_001263.1"/>
</dbReference>
<dbReference type="PDB" id="1NKW">
    <property type="method" value="X-ray"/>
    <property type="resolution" value="3.10 A"/>
    <property type="chains" value="L=1-116"/>
</dbReference>
<dbReference type="PDB" id="1NWX">
    <property type="method" value="X-ray"/>
    <property type="resolution" value="3.50 A"/>
    <property type="chains" value="L=1-116"/>
</dbReference>
<dbReference type="PDB" id="1NWY">
    <property type="method" value="X-ray"/>
    <property type="resolution" value="3.30 A"/>
    <property type="chains" value="L=1-116"/>
</dbReference>
<dbReference type="PDB" id="1SM1">
    <property type="method" value="X-ray"/>
    <property type="resolution" value="3.42 A"/>
    <property type="chains" value="L=1-116"/>
</dbReference>
<dbReference type="PDB" id="1XBP">
    <property type="method" value="X-ray"/>
    <property type="resolution" value="3.50 A"/>
    <property type="chains" value="L=1-116"/>
</dbReference>
<dbReference type="PDB" id="2ZJP">
    <property type="method" value="X-ray"/>
    <property type="resolution" value="3.70 A"/>
    <property type="chains" value="K=1-116"/>
</dbReference>
<dbReference type="PDB" id="2ZJQ">
    <property type="method" value="X-ray"/>
    <property type="resolution" value="3.30 A"/>
    <property type="chains" value="K=1-116"/>
</dbReference>
<dbReference type="PDB" id="2ZJR">
    <property type="method" value="X-ray"/>
    <property type="resolution" value="2.91 A"/>
    <property type="chains" value="K=1-116"/>
</dbReference>
<dbReference type="PDB" id="3CF5">
    <property type="method" value="X-ray"/>
    <property type="resolution" value="3.30 A"/>
    <property type="chains" value="K=1-116"/>
</dbReference>
<dbReference type="PDB" id="3DLL">
    <property type="method" value="X-ray"/>
    <property type="resolution" value="3.50 A"/>
    <property type="chains" value="K=1-116"/>
</dbReference>
<dbReference type="PDB" id="3PIO">
    <property type="method" value="X-ray"/>
    <property type="resolution" value="3.25 A"/>
    <property type="chains" value="K=1-116"/>
</dbReference>
<dbReference type="PDB" id="3PIP">
    <property type="method" value="X-ray"/>
    <property type="resolution" value="3.45 A"/>
    <property type="chains" value="K=1-116"/>
</dbReference>
<dbReference type="PDB" id="4IO9">
    <property type="method" value="X-ray"/>
    <property type="resolution" value="3.20 A"/>
    <property type="chains" value="K=1-116"/>
</dbReference>
<dbReference type="PDB" id="4IOA">
    <property type="method" value="X-ray"/>
    <property type="resolution" value="3.20 A"/>
    <property type="chains" value="K=1-116"/>
</dbReference>
<dbReference type="PDB" id="4IOC">
    <property type="method" value="X-ray"/>
    <property type="resolution" value="3.60 A"/>
    <property type="chains" value="K=1-116"/>
</dbReference>
<dbReference type="PDB" id="4U67">
    <property type="method" value="X-ray"/>
    <property type="resolution" value="3.65 A"/>
    <property type="chains" value="K=1-116"/>
</dbReference>
<dbReference type="PDB" id="4V49">
    <property type="method" value="X-ray"/>
    <property type="resolution" value="8.70 A"/>
    <property type="chains" value="L=3-116"/>
</dbReference>
<dbReference type="PDB" id="4V4A">
    <property type="method" value="X-ray"/>
    <property type="resolution" value="9.50 A"/>
    <property type="chains" value="L=3-116"/>
</dbReference>
<dbReference type="PDB" id="4V4G">
    <property type="method" value="X-ray"/>
    <property type="resolution" value="11.50 A"/>
    <property type="chains" value="O=3-116"/>
</dbReference>
<dbReference type="PDB" id="4WFN">
    <property type="method" value="X-ray"/>
    <property type="resolution" value="3.54 A"/>
    <property type="chains" value="K=1-116"/>
</dbReference>
<dbReference type="PDB" id="5DM6">
    <property type="method" value="X-ray"/>
    <property type="resolution" value="2.90 A"/>
    <property type="chains" value="K=3-115"/>
</dbReference>
<dbReference type="PDB" id="5DM7">
    <property type="method" value="X-ray"/>
    <property type="resolution" value="3.00 A"/>
    <property type="chains" value="K=3-115"/>
</dbReference>
<dbReference type="PDB" id="5JVG">
    <property type="method" value="X-ray"/>
    <property type="resolution" value="3.43 A"/>
    <property type="chains" value="K=1-116"/>
</dbReference>
<dbReference type="PDB" id="5JVH">
    <property type="method" value="X-ray"/>
    <property type="resolution" value="3.58 A"/>
    <property type="chains" value="K=1-116"/>
</dbReference>
<dbReference type="PDB" id="7A0R">
    <property type="method" value="X-ray"/>
    <property type="resolution" value="3.30 A"/>
    <property type="chains" value="K=1-116"/>
</dbReference>
<dbReference type="PDB" id="7A0S">
    <property type="method" value="X-ray"/>
    <property type="resolution" value="3.22 A"/>
    <property type="chains" value="K=1-116"/>
</dbReference>
<dbReference type="PDB" id="7A18">
    <property type="method" value="X-ray"/>
    <property type="resolution" value="3.40 A"/>
    <property type="chains" value="K=1-115"/>
</dbReference>
<dbReference type="PDBsum" id="1NKW"/>
<dbReference type="PDBsum" id="1NWX"/>
<dbReference type="PDBsum" id="1NWY"/>
<dbReference type="PDBsum" id="1SM1"/>
<dbReference type="PDBsum" id="1XBP"/>
<dbReference type="PDBsum" id="2ZJP"/>
<dbReference type="PDBsum" id="2ZJQ"/>
<dbReference type="PDBsum" id="2ZJR"/>
<dbReference type="PDBsum" id="3CF5"/>
<dbReference type="PDBsum" id="3DLL"/>
<dbReference type="PDBsum" id="3PIO"/>
<dbReference type="PDBsum" id="3PIP"/>
<dbReference type="PDBsum" id="4IO9"/>
<dbReference type="PDBsum" id="4IOA"/>
<dbReference type="PDBsum" id="4IOC"/>
<dbReference type="PDBsum" id="4U67"/>
<dbReference type="PDBsum" id="4V49"/>
<dbReference type="PDBsum" id="4V4A"/>
<dbReference type="PDBsum" id="4V4G"/>
<dbReference type="PDBsum" id="4WFN"/>
<dbReference type="PDBsum" id="5DM6"/>
<dbReference type="PDBsum" id="5DM7"/>
<dbReference type="PDBsum" id="5JVG"/>
<dbReference type="PDBsum" id="5JVH"/>
<dbReference type="PDBsum" id="7A0R"/>
<dbReference type="PDBsum" id="7A0S"/>
<dbReference type="PDBsum" id="7A18"/>
<dbReference type="SMR" id="Q9RSJ5"/>
<dbReference type="FunCoup" id="Q9RSJ5">
    <property type="interactions" value="397"/>
</dbReference>
<dbReference type="IntAct" id="Q9RSJ5">
    <property type="interactions" value="1"/>
</dbReference>
<dbReference type="STRING" id="243230.DR_2129"/>
<dbReference type="PaxDb" id="243230-DR_2129"/>
<dbReference type="EnsemblBacteria" id="AAF11679">
    <property type="protein sequence ID" value="AAF11679"/>
    <property type="gene ID" value="DR_2129"/>
</dbReference>
<dbReference type="GeneID" id="69518371"/>
<dbReference type="KEGG" id="dra:DR_2129"/>
<dbReference type="PATRIC" id="fig|243230.17.peg.2352"/>
<dbReference type="eggNOG" id="COG0203">
    <property type="taxonomic scope" value="Bacteria"/>
</dbReference>
<dbReference type="HOGENOM" id="CLU_074407_2_0_0"/>
<dbReference type="InParanoid" id="Q9RSJ5"/>
<dbReference type="OrthoDB" id="9809073at2"/>
<dbReference type="EvolutionaryTrace" id="Q9RSJ5"/>
<dbReference type="Proteomes" id="UP000002524">
    <property type="component" value="Chromosome 1"/>
</dbReference>
<dbReference type="GO" id="GO:0022625">
    <property type="term" value="C:cytosolic large ribosomal subunit"/>
    <property type="evidence" value="ECO:0000318"/>
    <property type="project" value="GO_Central"/>
</dbReference>
<dbReference type="GO" id="GO:0019843">
    <property type="term" value="F:rRNA binding"/>
    <property type="evidence" value="ECO:0007669"/>
    <property type="project" value="UniProtKB-KW"/>
</dbReference>
<dbReference type="GO" id="GO:0003735">
    <property type="term" value="F:structural constituent of ribosome"/>
    <property type="evidence" value="ECO:0000318"/>
    <property type="project" value="GO_Central"/>
</dbReference>
<dbReference type="GO" id="GO:0006412">
    <property type="term" value="P:translation"/>
    <property type="evidence" value="ECO:0007669"/>
    <property type="project" value="UniProtKB-UniRule"/>
</dbReference>
<dbReference type="FunFam" id="3.90.1030.10:FF:000013">
    <property type="entry name" value="50S ribosomal protein L17"/>
    <property type="match status" value="1"/>
</dbReference>
<dbReference type="Gene3D" id="3.90.1030.10">
    <property type="entry name" value="Ribosomal protein L17"/>
    <property type="match status" value="1"/>
</dbReference>
<dbReference type="HAMAP" id="MF_01368">
    <property type="entry name" value="Ribosomal_bL17"/>
    <property type="match status" value="1"/>
</dbReference>
<dbReference type="InterPro" id="IPR000456">
    <property type="entry name" value="Ribosomal_bL17"/>
</dbReference>
<dbReference type="InterPro" id="IPR047859">
    <property type="entry name" value="Ribosomal_bL17_CS"/>
</dbReference>
<dbReference type="InterPro" id="IPR036373">
    <property type="entry name" value="Ribosomal_bL17_sf"/>
</dbReference>
<dbReference type="NCBIfam" id="TIGR00059">
    <property type="entry name" value="L17"/>
    <property type="match status" value="1"/>
</dbReference>
<dbReference type="PANTHER" id="PTHR14413:SF16">
    <property type="entry name" value="LARGE RIBOSOMAL SUBUNIT PROTEIN BL17M"/>
    <property type="match status" value="1"/>
</dbReference>
<dbReference type="PANTHER" id="PTHR14413">
    <property type="entry name" value="RIBOSOMAL PROTEIN L17"/>
    <property type="match status" value="1"/>
</dbReference>
<dbReference type="Pfam" id="PF01196">
    <property type="entry name" value="Ribosomal_L17"/>
    <property type="match status" value="1"/>
</dbReference>
<dbReference type="SUPFAM" id="SSF64263">
    <property type="entry name" value="Prokaryotic ribosomal protein L17"/>
    <property type="match status" value="1"/>
</dbReference>
<dbReference type="PROSITE" id="PS01167">
    <property type="entry name" value="RIBOSOMAL_L17"/>
    <property type="match status" value="1"/>
</dbReference>
<proteinExistence type="evidence at protein level"/>